<protein>
    <recommendedName>
        <fullName evidence="9">NAD(+) hydrolase SARM1</fullName>
        <shortName evidence="9">NADase SARM1</shortName>
        <ecNumber evidence="2">3.2.2.6</ecNumber>
    </recommendedName>
    <alternativeName>
        <fullName evidence="9">NADP(+) hydrolase SARM1</fullName>
        <ecNumber evidence="2">3.2.2.-</ecNumber>
    </alternativeName>
    <alternativeName>
        <fullName evidence="8">Sterile alpha and TIR motif-containing protein 1</fullName>
    </alternativeName>
</protein>
<dbReference type="EC" id="3.2.2.6" evidence="2"/>
<dbReference type="EC" id="3.2.2.-" evidence="2"/>
<dbReference type="EMBL" id="AABR07030074">
    <property type="status" value="NOT_ANNOTATED_CDS"/>
    <property type="molecule type" value="Genomic_DNA"/>
</dbReference>
<dbReference type="EMBL" id="CH473948">
    <property type="protein sequence ID" value="EDM05357.1"/>
    <property type="molecule type" value="Genomic_DNA"/>
</dbReference>
<dbReference type="RefSeq" id="NP_001099287.1">
    <property type="nucleotide sequence ID" value="NM_001105817.1"/>
</dbReference>
<dbReference type="SMR" id="D3ZUM2"/>
<dbReference type="FunCoup" id="D3ZUM2">
    <property type="interactions" value="1493"/>
</dbReference>
<dbReference type="STRING" id="10116.ENSRNOP00000013639"/>
<dbReference type="iPTMnet" id="D3ZUM2"/>
<dbReference type="PhosphoSitePlus" id="D3ZUM2"/>
<dbReference type="jPOST" id="D3ZUM2"/>
<dbReference type="PaxDb" id="10116-ENSRNOP00000013639"/>
<dbReference type="PeptideAtlas" id="D3ZUM2"/>
<dbReference type="Ensembl" id="ENSRNOT00000013639.6">
    <property type="protein sequence ID" value="ENSRNOP00000013639.5"/>
    <property type="gene ID" value="ENSRNOG00000010244.6"/>
</dbReference>
<dbReference type="GeneID" id="287545"/>
<dbReference type="KEGG" id="rno:287545"/>
<dbReference type="AGR" id="RGD:1310078"/>
<dbReference type="CTD" id="23098"/>
<dbReference type="RGD" id="1310078">
    <property type="gene designation" value="Sarm1"/>
</dbReference>
<dbReference type="eggNOG" id="KOG3678">
    <property type="taxonomic scope" value="Eukaryota"/>
</dbReference>
<dbReference type="GeneTree" id="ENSGT00390000004155"/>
<dbReference type="HOGENOM" id="CLU_003286_2_0_1"/>
<dbReference type="InParanoid" id="D3ZUM2"/>
<dbReference type="OMA" id="CERFWEH"/>
<dbReference type="OrthoDB" id="202764at2759"/>
<dbReference type="PhylomeDB" id="D3ZUM2"/>
<dbReference type="TreeFam" id="TF315263"/>
<dbReference type="Reactome" id="R-RNO-166166">
    <property type="pathway name" value="MyD88-independent TLR4 cascade"/>
</dbReference>
<dbReference type="Reactome" id="R-RNO-936964">
    <property type="pathway name" value="Activation of IRF3, IRF7 mediated by TBK1, IKKEpsilon (IKBKE)"/>
</dbReference>
<dbReference type="Reactome" id="R-RNO-937041">
    <property type="pathway name" value="IKK complex recruitment mediated by RIP1"/>
</dbReference>
<dbReference type="Reactome" id="R-RNO-937072">
    <property type="pathway name" value="TRAF6-mediated induction of TAK1 complex within TLR4 complex"/>
</dbReference>
<dbReference type="PRO" id="PR:D3ZUM2"/>
<dbReference type="Proteomes" id="UP000002494">
    <property type="component" value="Chromosome 10"/>
</dbReference>
<dbReference type="Proteomes" id="UP000234681">
    <property type="component" value="Chromosome 10"/>
</dbReference>
<dbReference type="Bgee" id="ENSRNOG00000010244">
    <property type="expression patterns" value="Expressed in frontal cortex and 11 other cell types or tissues"/>
</dbReference>
<dbReference type="GO" id="GO:0030424">
    <property type="term" value="C:axon"/>
    <property type="evidence" value="ECO:0007669"/>
    <property type="project" value="UniProtKB-SubCell"/>
</dbReference>
<dbReference type="GO" id="GO:0009986">
    <property type="term" value="C:cell surface"/>
    <property type="evidence" value="ECO:0000266"/>
    <property type="project" value="RGD"/>
</dbReference>
<dbReference type="GO" id="GO:0005737">
    <property type="term" value="C:cytoplasm"/>
    <property type="evidence" value="ECO:0000266"/>
    <property type="project" value="RGD"/>
</dbReference>
<dbReference type="GO" id="GO:0030425">
    <property type="term" value="C:dendrite"/>
    <property type="evidence" value="ECO:0000266"/>
    <property type="project" value="RGD"/>
</dbReference>
<dbReference type="GO" id="GO:0099243">
    <property type="term" value="C:extrinsic component of synaptic membrane"/>
    <property type="evidence" value="ECO:0000314"/>
    <property type="project" value="SynGO"/>
</dbReference>
<dbReference type="GO" id="GO:0098978">
    <property type="term" value="C:glutamatergic synapse"/>
    <property type="evidence" value="ECO:0000314"/>
    <property type="project" value="SynGO"/>
</dbReference>
<dbReference type="GO" id="GO:0005874">
    <property type="term" value="C:microtubule"/>
    <property type="evidence" value="ECO:0000266"/>
    <property type="project" value="RGD"/>
</dbReference>
<dbReference type="GO" id="GO:0015630">
    <property type="term" value="C:microtubule cytoskeleton"/>
    <property type="evidence" value="ECO:0000266"/>
    <property type="project" value="RGD"/>
</dbReference>
<dbReference type="GO" id="GO:0005741">
    <property type="term" value="C:mitochondrial outer membrane"/>
    <property type="evidence" value="ECO:0000266"/>
    <property type="project" value="RGD"/>
</dbReference>
<dbReference type="GO" id="GO:0005739">
    <property type="term" value="C:mitochondrion"/>
    <property type="evidence" value="ECO:0000266"/>
    <property type="project" value="RGD"/>
</dbReference>
<dbReference type="GO" id="GO:0031594">
    <property type="term" value="C:neuromuscular junction"/>
    <property type="evidence" value="ECO:0000266"/>
    <property type="project" value="RGD"/>
</dbReference>
<dbReference type="GO" id="GO:0032991">
    <property type="term" value="C:protein-containing complex"/>
    <property type="evidence" value="ECO:0000266"/>
    <property type="project" value="RGD"/>
</dbReference>
<dbReference type="GO" id="GO:0045202">
    <property type="term" value="C:synapse"/>
    <property type="evidence" value="ECO:0000266"/>
    <property type="project" value="RGD"/>
</dbReference>
<dbReference type="GO" id="GO:0003953">
    <property type="term" value="F:NAD+ nucleosidase activity"/>
    <property type="evidence" value="ECO:0000266"/>
    <property type="project" value="RGD"/>
</dbReference>
<dbReference type="GO" id="GO:0061809">
    <property type="term" value="F:NAD+ nucleosidase activity, cyclic ADP-ribose generating"/>
    <property type="evidence" value="ECO:0000266"/>
    <property type="project" value="RGD"/>
</dbReference>
<dbReference type="GO" id="GO:0035591">
    <property type="term" value="F:signaling adaptor activity"/>
    <property type="evidence" value="ECO:0007669"/>
    <property type="project" value="InterPro"/>
</dbReference>
<dbReference type="GO" id="GO:0030154">
    <property type="term" value="P:cell differentiation"/>
    <property type="evidence" value="ECO:0007669"/>
    <property type="project" value="UniProtKB-KW"/>
</dbReference>
<dbReference type="GO" id="GO:0045087">
    <property type="term" value="P:innate immune response"/>
    <property type="evidence" value="ECO:0007669"/>
    <property type="project" value="UniProtKB-KW"/>
</dbReference>
<dbReference type="GO" id="GO:0099010">
    <property type="term" value="P:modification of postsynaptic structure"/>
    <property type="evidence" value="ECO:0000314"/>
    <property type="project" value="SynGO"/>
</dbReference>
<dbReference type="GO" id="GO:0019677">
    <property type="term" value="P:NAD catabolic process"/>
    <property type="evidence" value="ECO:0000266"/>
    <property type="project" value="RGD"/>
</dbReference>
<dbReference type="GO" id="GO:0034128">
    <property type="term" value="P:negative regulation of MyD88-independent toll-like receptor signaling pathway"/>
    <property type="evidence" value="ECO:0007669"/>
    <property type="project" value="InterPro"/>
</dbReference>
<dbReference type="GO" id="GO:0007399">
    <property type="term" value="P:nervous system development"/>
    <property type="evidence" value="ECO:0007669"/>
    <property type="project" value="UniProtKB-KW"/>
</dbReference>
<dbReference type="GO" id="GO:0050877">
    <property type="term" value="P:nervous system process"/>
    <property type="evidence" value="ECO:0000266"/>
    <property type="project" value="RGD"/>
</dbReference>
<dbReference type="GO" id="GO:0070585">
    <property type="term" value="P:protein localization to mitochondrion"/>
    <property type="evidence" value="ECO:0000266"/>
    <property type="project" value="RGD"/>
</dbReference>
<dbReference type="GO" id="GO:0048814">
    <property type="term" value="P:regulation of dendrite morphogenesis"/>
    <property type="evidence" value="ECO:0000266"/>
    <property type="project" value="RGD"/>
</dbReference>
<dbReference type="GO" id="GO:0043523">
    <property type="term" value="P:regulation of neuron apoptotic process"/>
    <property type="evidence" value="ECO:0000266"/>
    <property type="project" value="RGD"/>
</dbReference>
<dbReference type="GO" id="GO:1905806">
    <property type="term" value="P:regulation of synapse pruning"/>
    <property type="evidence" value="ECO:0000266"/>
    <property type="project" value="RGD"/>
</dbReference>
<dbReference type="GO" id="GO:0048678">
    <property type="term" value="P:response to axon injury"/>
    <property type="evidence" value="ECO:0000266"/>
    <property type="project" value="RGD"/>
</dbReference>
<dbReference type="GO" id="GO:0009749">
    <property type="term" value="P:response to glucose"/>
    <property type="evidence" value="ECO:0000266"/>
    <property type="project" value="RGD"/>
</dbReference>
<dbReference type="GO" id="GO:0007165">
    <property type="term" value="P:signal transduction"/>
    <property type="evidence" value="ECO:0007669"/>
    <property type="project" value="InterPro"/>
</dbReference>
<dbReference type="CDD" id="cd09501">
    <property type="entry name" value="SAM_SARM1-like_repeat1"/>
    <property type="match status" value="1"/>
</dbReference>
<dbReference type="CDD" id="cd09502">
    <property type="entry name" value="SAM_SARM1-like_repeat2"/>
    <property type="match status" value="1"/>
</dbReference>
<dbReference type="CDD" id="cd24153">
    <property type="entry name" value="SARM1_N"/>
    <property type="match status" value="1"/>
</dbReference>
<dbReference type="FunFam" id="1.10.150.50:FF:000062">
    <property type="entry name" value="Sterile alpha and TIR motif containing 1"/>
    <property type="match status" value="1"/>
</dbReference>
<dbReference type="FunFam" id="3.40.50.10140:FF:000013">
    <property type="entry name" value="Sterile alpha and TIR motif containing 1"/>
    <property type="match status" value="1"/>
</dbReference>
<dbReference type="FunFam" id="1.10.150.50:FF:000043">
    <property type="entry name" value="Sterile alpha and TIR motif-containing 1"/>
    <property type="match status" value="1"/>
</dbReference>
<dbReference type="FunFam" id="1.25.10.10:FF:000397">
    <property type="entry name" value="sterile alpha and TIR motif-containing protein 1"/>
    <property type="match status" value="1"/>
</dbReference>
<dbReference type="Gene3D" id="1.25.10.10">
    <property type="entry name" value="Leucine-rich Repeat Variant"/>
    <property type="match status" value="1"/>
</dbReference>
<dbReference type="Gene3D" id="3.40.50.10140">
    <property type="entry name" value="Toll/interleukin-1 receptor homology (TIR) domain"/>
    <property type="match status" value="1"/>
</dbReference>
<dbReference type="Gene3D" id="1.10.150.50">
    <property type="entry name" value="Transcription Factor, Ets-1"/>
    <property type="match status" value="2"/>
</dbReference>
<dbReference type="InterPro" id="IPR011989">
    <property type="entry name" value="ARM-like"/>
</dbReference>
<dbReference type="InterPro" id="IPR016024">
    <property type="entry name" value="ARM-type_fold"/>
</dbReference>
<dbReference type="InterPro" id="IPR001660">
    <property type="entry name" value="SAM"/>
</dbReference>
<dbReference type="InterPro" id="IPR013761">
    <property type="entry name" value="SAM/pointed_sf"/>
</dbReference>
<dbReference type="InterPro" id="IPR039184">
    <property type="entry name" value="SARM1"/>
</dbReference>
<dbReference type="InterPro" id="IPR000157">
    <property type="entry name" value="TIR_dom"/>
</dbReference>
<dbReference type="InterPro" id="IPR035897">
    <property type="entry name" value="Toll_tir_struct_dom_sf"/>
</dbReference>
<dbReference type="PANTHER" id="PTHR22998:SF1">
    <property type="entry name" value="NAD(+) HYDROLASE SARM1"/>
    <property type="match status" value="1"/>
</dbReference>
<dbReference type="PANTHER" id="PTHR22998">
    <property type="entry name" value="SARM1"/>
    <property type="match status" value="1"/>
</dbReference>
<dbReference type="Pfam" id="PF07647">
    <property type="entry name" value="SAM_2"/>
    <property type="match status" value="2"/>
</dbReference>
<dbReference type="Pfam" id="PF13676">
    <property type="entry name" value="TIR_2"/>
    <property type="match status" value="1"/>
</dbReference>
<dbReference type="SMART" id="SM00454">
    <property type="entry name" value="SAM"/>
    <property type="match status" value="2"/>
</dbReference>
<dbReference type="SMART" id="SM00255">
    <property type="entry name" value="TIR"/>
    <property type="match status" value="1"/>
</dbReference>
<dbReference type="SUPFAM" id="SSF48371">
    <property type="entry name" value="ARM repeat"/>
    <property type="match status" value="1"/>
</dbReference>
<dbReference type="SUPFAM" id="SSF47769">
    <property type="entry name" value="SAM/Pointed domain"/>
    <property type="match status" value="2"/>
</dbReference>
<dbReference type="SUPFAM" id="SSF52200">
    <property type="entry name" value="Toll/Interleukin receptor TIR domain"/>
    <property type="match status" value="1"/>
</dbReference>
<dbReference type="PROSITE" id="PS50105">
    <property type="entry name" value="SAM_DOMAIN"/>
    <property type="match status" value="2"/>
</dbReference>
<dbReference type="PROSITE" id="PS50104">
    <property type="entry name" value="TIR"/>
    <property type="match status" value="1"/>
</dbReference>
<comment type="function">
    <text evidence="1 2">NAD(+) hydrolase, which plays a key role in axonal degeneration following injury by regulating NAD(+) metabolism. Acts as a negative regulator of MYD88- and TRIF-dependent toll-like receptor signaling pathway by promoting Wallerian degeneration, an injury-induced form of programmed subcellular death which involves degeneration of an axon distal to the injury site. Wallerian degeneration is triggered by NAD(+) depletion: in response to injury, SARM1 is activated and catalyzes cleavage of NAD(+) into ADP-D-ribose (ADPR), cyclic ADPR (cADPR) and nicotinamide; NAD(+) cleavage promoting cytoskeletal degradation and axon destruction. Also able to hydrolyze NADP(+), but not other NAD(+)-related molecules. Can activate neuronal cell death in response to stress. Regulates dendritic arborization through the MAPK4-JNK pathway. Involved in innate immune response: inhibits both TICAM1/TRIF- and MYD88-dependent activation of JUN/AP-1, TRIF-dependent activation of NF-kappa-B and IRF3, and the phosphorylation of MAPK14/p38.</text>
</comment>
<comment type="catalytic activity">
    <reaction evidence="2">
        <text>NAD(+) + H2O = ADP-D-ribose + nicotinamide + H(+)</text>
        <dbReference type="Rhea" id="RHEA:16301"/>
        <dbReference type="ChEBI" id="CHEBI:15377"/>
        <dbReference type="ChEBI" id="CHEBI:15378"/>
        <dbReference type="ChEBI" id="CHEBI:17154"/>
        <dbReference type="ChEBI" id="CHEBI:57540"/>
        <dbReference type="ChEBI" id="CHEBI:57967"/>
        <dbReference type="EC" id="3.2.2.6"/>
    </reaction>
    <physiologicalReaction direction="left-to-right" evidence="2">
        <dbReference type="Rhea" id="RHEA:16302"/>
    </physiologicalReaction>
</comment>
<comment type="catalytic activity">
    <reaction evidence="2">
        <text>NAD(+) = cyclic ADP-beta-D-ribose + nicotinamide + H(+)</text>
        <dbReference type="Rhea" id="RHEA:38611"/>
        <dbReference type="ChEBI" id="CHEBI:15378"/>
        <dbReference type="ChEBI" id="CHEBI:17154"/>
        <dbReference type="ChEBI" id="CHEBI:57540"/>
        <dbReference type="ChEBI" id="CHEBI:73672"/>
    </reaction>
    <physiologicalReaction direction="left-to-right" evidence="2">
        <dbReference type="Rhea" id="RHEA:38612"/>
    </physiologicalReaction>
</comment>
<comment type="catalytic activity">
    <reaction evidence="2">
        <text>NADP(+) + H2O = ADP-D-ribose 2'-phosphate + nicotinamide + H(+)</text>
        <dbReference type="Rhea" id="RHEA:19849"/>
        <dbReference type="ChEBI" id="CHEBI:15377"/>
        <dbReference type="ChEBI" id="CHEBI:15378"/>
        <dbReference type="ChEBI" id="CHEBI:17154"/>
        <dbReference type="ChEBI" id="CHEBI:58349"/>
        <dbReference type="ChEBI" id="CHEBI:58673"/>
    </reaction>
    <physiologicalReaction direction="left-to-right" evidence="2">
        <dbReference type="Rhea" id="RHEA:19850"/>
    </physiologicalReaction>
</comment>
<comment type="activity regulation">
    <text evidence="2">Autoinhibited: in the inactive state, the enzymatic TIR domain is held apart by the autoinhibiting ARM repeats. NAD(+)-binding to ARM repeats maintains an inactive state by promoting interaction between ARM repeats and the TIR domain, thereby facilitating inhibition of the enzymatic TIR domain. Following activation, possibly by nicotinamide mononucleotide (NMN), auto-inhibitory interactions are released, allowing self-association of the TIR domains and subsequent activation of the NAD(+) hydrolase (NADase) activity. Self-association of TIR domains is facilitated by the octamer of SAM domains.</text>
</comment>
<comment type="subunit">
    <text evidence="1 2">Homooctamer; forms an octameric ring via SAM domains. Interacts with TICAM1/TRIF and thereby interferes with TICAM1/TRIF function. Interacts with MAPK10/JNK3 and SDC2 (via cytoplasmic domain).</text>
</comment>
<comment type="subcellular location">
    <subcellularLocation>
        <location evidence="2">Cytoplasm</location>
    </subcellularLocation>
    <subcellularLocation>
        <location evidence="1">Cell projection</location>
        <location evidence="1">Axon</location>
    </subcellularLocation>
    <subcellularLocation>
        <location evidence="1">Cell projection</location>
        <location evidence="1">Dendrite</location>
    </subcellularLocation>
    <subcellularLocation>
        <location evidence="1">Synapse</location>
    </subcellularLocation>
    <subcellularLocation>
        <location evidence="2">Mitochondrion</location>
    </subcellularLocation>
    <text evidence="1">Associated with microtubules.</text>
</comment>
<comment type="domain">
    <text evidence="2">The TIR domain mediates NAD(+) hydrolase (NADase) activity. Self-association of TIR domains is required for NADase activity.</text>
</comment>
<comment type="domain">
    <text evidence="2">The ARM repeats inhibit the NAD(+) hydrolase (NADase) activity by binding to NAD(+): NAD(+)-binding to ARM repeats facilitates inhibition of the TIR domain NADase through their domain interface. In contrast to classical ARM repeats, the last helix of ARM 6 does not fold back to interact with the first two helices, but instead turns towards the N-terminus of SARM1. As a result, the two following motifs ARM 7 and ARM 8 reverse their directions and lie perpendicularly. Moreover, ARM repeats interact with different domains not only within each protomer but also of the adjacent ones.</text>
</comment>
<comment type="PTM">
    <text evidence="2 7">Phosphorylation at Ser-548 by JNK kinases (MAPK8, MAPK9 and /or MAPK10) enhance the NAD(+) hydrolase (NADase) activity (PubMed:32968873). Phosphorylation at Ser-548 and subsequent activation takes place in response to oxidative stress conditions and inhibits mitochondrial respiration (By similarity). Phosphorylation at Ser-548 increases in response to cerebral ischemia/reperfusion (I/R) injury (PubMed:32968873).</text>
</comment>
<comment type="similarity">
    <text evidence="9">Belongs to the SARM1 family.</text>
</comment>
<gene>
    <name evidence="8 10" type="primary">Sarm1</name>
</gene>
<reference key="1">
    <citation type="journal article" date="2004" name="Nature">
        <title>Genome sequence of the Brown Norway rat yields insights into mammalian evolution.</title>
        <authorList>
            <person name="Gibbs R.A."/>
            <person name="Weinstock G.M."/>
            <person name="Metzker M.L."/>
            <person name="Muzny D.M."/>
            <person name="Sodergren E.J."/>
            <person name="Scherer S."/>
            <person name="Scott G."/>
            <person name="Steffen D."/>
            <person name="Worley K.C."/>
            <person name="Burch P.E."/>
            <person name="Okwuonu G."/>
            <person name="Hines S."/>
            <person name="Lewis L."/>
            <person name="Deramo C."/>
            <person name="Delgado O."/>
            <person name="Dugan-Rocha S."/>
            <person name="Miner G."/>
            <person name="Morgan M."/>
            <person name="Hawes A."/>
            <person name="Gill R."/>
            <person name="Holt R.A."/>
            <person name="Adams M.D."/>
            <person name="Amanatides P.G."/>
            <person name="Baden-Tillson H."/>
            <person name="Barnstead M."/>
            <person name="Chin S."/>
            <person name="Evans C.A."/>
            <person name="Ferriera S."/>
            <person name="Fosler C."/>
            <person name="Glodek A."/>
            <person name="Gu Z."/>
            <person name="Jennings D."/>
            <person name="Kraft C.L."/>
            <person name="Nguyen T."/>
            <person name="Pfannkoch C.M."/>
            <person name="Sitter C."/>
            <person name="Sutton G.G."/>
            <person name="Venter J.C."/>
            <person name="Woodage T."/>
            <person name="Smith D."/>
            <person name="Lee H.-M."/>
            <person name="Gustafson E."/>
            <person name="Cahill P."/>
            <person name="Kana A."/>
            <person name="Doucette-Stamm L."/>
            <person name="Weinstock K."/>
            <person name="Fechtel K."/>
            <person name="Weiss R.B."/>
            <person name="Dunn D.M."/>
            <person name="Green E.D."/>
            <person name="Blakesley R.W."/>
            <person name="Bouffard G.G."/>
            <person name="De Jong P.J."/>
            <person name="Osoegawa K."/>
            <person name="Zhu B."/>
            <person name="Marra M."/>
            <person name="Schein J."/>
            <person name="Bosdet I."/>
            <person name="Fjell C."/>
            <person name="Jones S."/>
            <person name="Krzywinski M."/>
            <person name="Mathewson C."/>
            <person name="Siddiqui A."/>
            <person name="Wye N."/>
            <person name="McPherson J."/>
            <person name="Zhao S."/>
            <person name="Fraser C.M."/>
            <person name="Shetty J."/>
            <person name="Shatsman S."/>
            <person name="Geer K."/>
            <person name="Chen Y."/>
            <person name="Abramzon S."/>
            <person name="Nierman W.C."/>
            <person name="Havlak P.H."/>
            <person name="Chen R."/>
            <person name="Durbin K.J."/>
            <person name="Egan A."/>
            <person name="Ren Y."/>
            <person name="Song X.-Z."/>
            <person name="Li B."/>
            <person name="Liu Y."/>
            <person name="Qin X."/>
            <person name="Cawley S."/>
            <person name="Cooney A.J."/>
            <person name="D'Souza L.M."/>
            <person name="Martin K."/>
            <person name="Wu J.Q."/>
            <person name="Gonzalez-Garay M.L."/>
            <person name="Jackson A.R."/>
            <person name="Kalafus K.J."/>
            <person name="McLeod M.P."/>
            <person name="Milosavljevic A."/>
            <person name="Virk D."/>
            <person name="Volkov A."/>
            <person name="Wheeler D.A."/>
            <person name="Zhang Z."/>
            <person name="Bailey J.A."/>
            <person name="Eichler E.E."/>
            <person name="Tuzun E."/>
            <person name="Birney E."/>
            <person name="Mongin E."/>
            <person name="Ureta-Vidal A."/>
            <person name="Woodwark C."/>
            <person name="Zdobnov E."/>
            <person name="Bork P."/>
            <person name="Suyama M."/>
            <person name="Torrents D."/>
            <person name="Alexandersson M."/>
            <person name="Trask B.J."/>
            <person name="Young J.M."/>
            <person name="Huang H."/>
            <person name="Wang H."/>
            <person name="Xing H."/>
            <person name="Daniels S."/>
            <person name="Gietzen D."/>
            <person name="Schmidt J."/>
            <person name="Stevens K."/>
            <person name="Vitt U."/>
            <person name="Wingrove J."/>
            <person name="Camara F."/>
            <person name="Mar Alba M."/>
            <person name="Abril J.F."/>
            <person name="Guigo R."/>
            <person name="Smit A."/>
            <person name="Dubchak I."/>
            <person name="Rubin E.M."/>
            <person name="Couronne O."/>
            <person name="Poliakov A."/>
            <person name="Huebner N."/>
            <person name="Ganten D."/>
            <person name="Goesele C."/>
            <person name="Hummel O."/>
            <person name="Kreitler T."/>
            <person name="Lee Y.-A."/>
            <person name="Monti J."/>
            <person name="Schulz H."/>
            <person name="Zimdahl H."/>
            <person name="Himmelbauer H."/>
            <person name="Lehrach H."/>
            <person name="Jacob H.J."/>
            <person name="Bromberg S."/>
            <person name="Gullings-Handley J."/>
            <person name="Jensen-Seaman M.I."/>
            <person name="Kwitek A.E."/>
            <person name="Lazar J."/>
            <person name="Pasko D."/>
            <person name="Tonellato P.J."/>
            <person name="Twigger S."/>
            <person name="Ponting C.P."/>
            <person name="Duarte J.M."/>
            <person name="Rice S."/>
            <person name="Goodstadt L."/>
            <person name="Beatson S.A."/>
            <person name="Emes R.D."/>
            <person name="Winter E.E."/>
            <person name="Webber C."/>
            <person name="Brandt P."/>
            <person name="Nyakatura G."/>
            <person name="Adetobi M."/>
            <person name="Chiaromonte F."/>
            <person name="Elnitski L."/>
            <person name="Eswara P."/>
            <person name="Hardison R.C."/>
            <person name="Hou M."/>
            <person name="Kolbe D."/>
            <person name="Makova K."/>
            <person name="Miller W."/>
            <person name="Nekrutenko A."/>
            <person name="Riemer C."/>
            <person name="Schwartz S."/>
            <person name="Taylor J."/>
            <person name="Yang S."/>
            <person name="Zhang Y."/>
            <person name="Lindpaintner K."/>
            <person name="Andrews T.D."/>
            <person name="Caccamo M."/>
            <person name="Clamp M."/>
            <person name="Clarke L."/>
            <person name="Curwen V."/>
            <person name="Durbin R.M."/>
            <person name="Eyras E."/>
            <person name="Searle S.M."/>
            <person name="Cooper G.M."/>
            <person name="Batzoglou S."/>
            <person name="Brudno M."/>
            <person name="Sidow A."/>
            <person name="Stone E.A."/>
            <person name="Payseur B.A."/>
            <person name="Bourque G."/>
            <person name="Lopez-Otin C."/>
            <person name="Puente X.S."/>
            <person name="Chakrabarti K."/>
            <person name="Chatterji S."/>
            <person name="Dewey C."/>
            <person name="Pachter L."/>
            <person name="Bray N."/>
            <person name="Yap V.B."/>
            <person name="Caspi A."/>
            <person name="Tesler G."/>
            <person name="Pevzner P.A."/>
            <person name="Haussler D."/>
            <person name="Roskin K.M."/>
            <person name="Baertsch R."/>
            <person name="Clawson H."/>
            <person name="Furey T.S."/>
            <person name="Hinrichs A.S."/>
            <person name="Karolchik D."/>
            <person name="Kent W.J."/>
            <person name="Rosenbloom K.R."/>
            <person name="Trumbower H."/>
            <person name="Weirauch M."/>
            <person name="Cooper D.N."/>
            <person name="Stenson P.D."/>
            <person name="Ma B."/>
            <person name="Brent M."/>
            <person name="Arumugam M."/>
            <person name="Shteynberg D."/>
            <person name="Copley R.R."/>
            <person name="Taylor M.S."/>
            <person name="Riethman H."/>
            <person name="Mudunuri U."/>
            <person name="Peterson J."/>
            <person name="Guyer M."/>
            <person name="Felsenfeld A."/>
            <person name="Old S."/>
            <person name="Mockrin S."/>
            <person name="Collins F.S."/>
        </authorList>
    </citation>
    <scope>NUCLEOTIDE SEQUENCE [LARGE SCALE GENOMIC DNA]</scope>
    <source>
        <strain>Brown Norway</strain>
    </source>
</reference>
<reference key="2">
    <citation type="submission" date="2005-07" db="EMBL/GenBank/DDBJ databases">
        <authorList>
            <person name="Mural R.J."/>
            <person name="Adams M.D."/>
            <person name="Myers E.W."/>
            <person name="Smith H.O."/>
            <person name="Venter J.C."/>
        </authorList>
    </citation>
    <scope>NUCLEOTIDE SEQUENCE [LARGE SCALE GENOMIC DNA]</scope>
</reference>
<reference key="3">
    <citation type="journal article" date="2021" name="Mol. Neurobiol.">
        <title>Phosphorylation at S548 as a functional switch of Sterile Alpha and TIR Motif-containing 1 in cerebral ischemia/reperfusion injury in rats.</title>
        <authorList>
            <person name="Xue T."/>
            <person name="Sun Q."/>
            <person name="Zhang Y."/>
            <person name="Wu X."/>
            <person name="Shen H."/>
            <person name="Li X."/>
            <person name="Wu J."/>
            <person name="Li H."/>
            <person name="Wang Z."/>
            <person name="Chen G."/>
        </authorList>
    </citation>
    <scope>PHOSPHORYLATION AT SER-548</scope>
    <scope>MUTAGENESIS OF SER-548</scope>
</reference>
<sequence>MVLTLLFSAYKLCRFFIMSGPRPGADRLTVPGPDRSGGTSPWWAAGGRGSREVSPGVGTEVQGALERSLPELQQALSELKQASAAQAVGAGLAEVFQLVEEAWLLPAVGREVAQGLCDAIRLDGGLDLLLRLLQAPELETRVQAARLLEQILVAENRDRVARIGLGVILNLSKEREPVELARSVAGILEHMFKHSEETCQRLVAAGGLDAVLYWCRRTDPALLRHCALALANCALHGGQTVQRCMVEKRAAEWLFPLAFSKEDELLRLHACLAVAVLATNKEVEREVEHSGTLALVEPLVASLDPGRFARCLVDASDTSQGRGPDDLQSLVLLLDSSRLEAQCIGAFYLCAEAAIKSLQGKTKVFSDIGAIQSLKRLVSYSTNGTTSTLAKRALRLLGEEVPRRILPCVASWKEAEVQTWLQQIGFSQYCENFRDQQVDGDLLLRLTDEELQTDLGMKSSITRKRFFRELTELKTFASYATCDRSNLADWLGSLDPRFRQYTYGLVSCGLDRSLLHRVSEQQLLEDCGIRLGVHRTRILSAAREMLHSPLPCTGGKPSGDTPDVFISYRRNSGSQLASLLKVHLQLHGFSVFIDVEKLEAGKFEDKLIQSVMAARNFVLVLSAGALDKCMQDHECKDWVHKEIVTALSCSKNIVPIIDGFEWPEPQALPEDMQAVLTFNGIKWSHEYQEATIEKIIRFLQGRPSQDSSAGSDTSLEGATSMGLP</sequence>
<accession>D3ZUM2</accession>
<name>SARM1_RAT</name>
<keyword id="KW-0966">Cell projection</keyword>
<keyword id="KW-0963">Cytoplasm</keyword>
<keyword id="KW-0221">Differentiation</keyword>
<keyword id="KW-0378">Hydrolase</keyword>
<keyword id="KW-0391">Immunity</keyword>
<keyword id="KW-0399">Innate immunity</keyword>
<keyword id="KW-0496">Mitochondrion</keyword>
<keyword id="KW-0520">NAD</keyword>
<keyword id="KW-0524">Neurogenesis</keyword>
<keyword id="KW-0597">Phosphoprotein</keyword>
<keyword id="KW-1185">Reference proteome</keyword>
<keyword id="KW-0677">Repeat</keyword>
<keyword id="KW-0770">Synapse</keyword>
<keyword id="KW-0809">Transit peptide</keyword>
<organism>
    <name type="scientific">Rattus norvegicus</name>
    <name type="common">Rat</name>
    <dbReference type="NCBI Taxonomy" id="10116"/>
    <lineage>
        <taxon>Eukaryota</taxon>
        <taxon>Metazoa</taxon>
        <taxon>Chordata</taxon>
        <taxon>Craniata</taxon>
        <taxon>Vertebrata</taxon>
        <taxon>Euteleostomi</taxon>
        <taxon>Mammalia</taxon>
        <taxon>Eutheria</taxon>
        <taxon>Euarchontoglires</taxon>
        <taxon>Glires</taxon>
        <taxon>Rodentia</taxon>
        <taxon>Myomorpha</taxon>
        <taxon>Muroidea</taxon>
        <taxon>Muridae</taxon>
        <taxon>Murinae</taxon>
        <taxon>Rattus</taxon>
    </lineage>
</organism>
<feature type="transit peptide" description="Mitochondrion" evidence="2">
    <location>
        <begin position="1"/>
        <end position="27"/>
    </location>
</feature>
<feature type="chain" id="PRO_0000452004" description="NAD(+) hydrolase SARM1">
    <location>
        <begin position="28"/>
        <end position="724"/>
    </location>
</feature>
<feature type="repeat" description="ARM 1" evidence="3">
    <location>
        <begin position="60"/>
        <end position="100"/>
    </location>
</feature>
<feature type="repeat" description="ARM 2" evidence="3">
    <location>
        <begin position="114"/>
        <end position="153"/>
    </location>
</feature>
<feature type="repeat" description="ARM 3" evidence="3">
    <location>
        <begin position="155"/>
        <end position="193"/>
    </location>
</feature>
<feature type="repeat" description="ARM 4" evidence="3">
    <location>
        <begin position="196"/>
        <end position="235"/>
    </location>
</feature>
<feature type="repeat" description="ARM 5" evidence="3">
    <location>
        <begin position="237"/>
        <end position="280"/>
    </location>
</feature>
<feature type="repeat" description="ARM 6" evidence="3">
    <location>
        <begin position="281"/>
        <end position="314"/>
    </location>
</feature>
<feature type="repeat" description="ARM 7" evidence="3">
    <location>
        <begin position="315"/>
        <end position="354"/>
    </location>
</feature>
<feature type="repeat" description="ARM 8" evidence="3">
    <location>
        <begin position="359"/>
        <end position="402"/>
    </location>
</feature>
<feature type="domain" description="SAM 1" evidence="4">
    <location>
        <begin position="412"/>
        <end position="476"/>
    </location>
</feature>
<feature type="domain" description="SAM 2" evidence="4">
    <location>
        <begin position="486"/>
        <end position="548"/>
    </location>
</feature>
<feature type="domain" description="TIR" evidence="5">
    <location>
        <begin position="560"/>
        <end position="703"/>
    </location>
</feature>
<feature type="region of interest" description="Disordered" evidence="6">
    <location>
        <begin position="703"/>
        <end position="724"/>
    </location>
</feature>
<feature type="compositionally biased region" description="Polar residues" evidence="6">
    <location>
        <begin position="703"/>
        <end position="717"/>
    </location>
</feature>
<feature type="active site" evidence="5">
    <location>
        <position position="642"/>
    </location>
</feature>
<feature type="binding site" evidence="2">
    <location>
        <position position="103"/>
    </location>
    <ligand>
        <name>NAD(+)</name>
        <dbReference type="ChEBI" id="CHEBI:57540"/>
        <label>1</label>
        <note>inhibitor</note>
    </ligand>
</feature>
<feature type="binding site" evidence="2">
    <location>
        <position position="110"/>
    </location>
    <ligand>
        <name>NAD(+)</name>
        <dbReference type="ChEBI" id="CHEBI:57540"/>
        <label>1</label>
        <note>inhibitor</note>
    </ligand>
</feature>
<feature type="binding site" evidence="2">
    <location>
        <begin position="149"/>
        <end position="157"/>
    </location>
    <ligand>
        <name>NAD(+)</name>
        <dbReference type="ChEBI" id="CHEBI:57540"/>
        <label>1</label>
        <note>inhibitor</note>
    </ligand>
</feature>
<feature type="binding site" evidence="2">
    <location>
        <begin position="190"/>
        <end position="193"/>
    </location>
    <ligand>
        <name>NAD(+)</name>
        <dbReference type="ChEBI" id="CHEBI:57540"/>
        <label>1</label>
        <note>inhibitor</note>
    </ligand>
</feature>
<feature type="binding site" evidence="5">
    <location>
        <begin position="569"/>
        <end position="570"/>
    </location>
    <ligand>
        <name>NAD(+)</name>
        <dbReference type="ChEBI" id="CHEBI:57540"/>
        <label>2</label>
        <note>substrate</note>
    </ligand>
</feature>
<feature type="binding site" evidence="5">
    <location>
        <position position="599"/>
    </location>
    <ligand>
        <name>NAD(+)</name>
        <dbReference type="ChEBI" id="CHEBI:57540"/>
        <label>2</label>
        <note>substrate</note>
    </ligand>
</feature>
<feature type="modified residue" description="Phosphoserine" evidence="7">
    <location>
        <position position="548"/>
    </location>
</feature>
<feature type="modified residue" description="Phosphoserine" evidence="1">
    <location>
        <position position="558"/>
    </location>
</feature>
<feature type="mutagenesis site" description="Reduced infarct size, neuronal death and neurobehavioral dysfunction in response to cerebral ischemia/reperfusion (I/R) injury." evidence="7">
    <original>S</original>
    <variation>A</variation>
    <location>
        <position position="548"/>
    </location>
</feature>
<proteinExistence type="evidence at protein level"/>
<evidence type="ECO:0000250" key="1">
    <source>
        <dbReference type="UniProtKB" id="Q6PDS3"/>
    </source>
</evidence>
<evidence type="ECO:0000250" key="2">
    <source>
        <dbReference type="UniProtKB" id="Q6SZW1"/>
    </source>
</evidence>
<evidence type="ECO:0000255" key="3"/>
<evidence type="ECO:0000255" key="4">
    <source>
        <dbReference type="PROSITE-ProRule" id="PRU00184"/>
    </source>
</evidence>
<evidence type="ECO:0000255" key="5">
    <source>
        <dbReference type="PROSITE-ProRule" id="PRU00204"/>
    </source>
</evidence>
<evidence type="ECO:0000256" key="6">
    <source>
        <dbReference type="SAM" id="MobiDB-lite"/>
    </source>
</evidence>
<evidence type="ECO:0000269" key="7">
    <source>
    </source>
</evidence>
<evidence type="ECO:0000303" key="8">
    <source>
    </source>
</evidence>
<evidence type="ECO:0000305" key="9"/>
<evidence type="ECO:0000312" key="10">
    <source>
        <dbReference type="RGD" id="1310078"/>
    </source>
</evidence>